<dbReference type="EC" id="1.17.7.4" evidence="1"/>
<dbReference type="EMBL" id="CP000800">
    <property type="protein sequence ID" value="ABV17375.1"/>
    <property type="molecule type" value="Genomic_DNA"/>
</dbReference>
<dbReference type="RefSeq" id="WP_001166395.1">
    <property type="nucleotide sequence ID" value="NC_009801.1"/>
</dbReference>
<dbReference type="SMR" id="A7ZHB8"/>
<dbReference type="GeneID" id="93777407"/>
<dbReference type="KEGG" id="ecw:EcE24377A_0029"/>
<dbReference type="HOGENOM" id="CLU_027486_1_0_6"/>
<dbReference type="UniPathway" id="UPA00056">
    <property type="reaction ID" value="UER00097"/>
</dbReference>
<dbReference type="UniPathway" id="UPA00059">
    <property type="reaction ID" value="UER00105"/>
</dbReference>
<dbReference type="Proteomes" id="UP000001122">
    <property type="component" value="Chromosome"/>
</dbReference>
<dbReference type="GO" id="GO:0051539">
    <property type="term" value="F:4 iron, 4 sulfur cluster binding"/>
    <property type="evidence" value="ECO:0007669"/>
    <property type="project" value="UniProtKB-UniRule"/>
</dbReference>
<dbReference type="GO" id="GO:0051745">
    <property type="term" value="F:4-hydroxy-3-methylbut-2-enyl diphosphate reductase activity"/>
    <property type="evidence" value="ECO:0007669"/>
    <property type="project" value="UniProtKB-UniRule"/>
</dbReference>
<dbReference type="GO" id="GO:0046872">
    <property type="term" value="F:metal ion binding"/>
    <property type="evidence" value="ECO:0007669"/>
    <property type="project" value="UniProtKB-KW"/>
</dbReference>
<dbReference type="GO" id="GO:0050992">
    <property type="term" value="P:dimethylallyl diphosphate biosynthetic process"/>
    <property type="evidence" value="ECO:0007669"/>
    <property type="project" value="UniProtKB-UniRule"/>
</dbReference>
<dbReference type="GO" id="GO:0019288">
    <property type="term" value="P:isopentenyl diphosphate biosynthetic process, methylerythritol 4-phosphate pathway"/>
    <property type="evidence" value="ECO:0007669"/>
    <property type="project" value="UniProtKB-UniRule"/>
</dbReference>
<dbReference type="GO" id="GO:0016114">
    <property type="term" value="P:terpenoid biosynthetic process"/>
    <property type="evidence" value="ECO:0007669"/>
    <property type="project" value="UniProtKB-UniRule"/>
</dbReference>
<dbReference type="CDD" id="cd13944">
    <property type="entry name" value="lytB_ispH"/>
    <property type="match status" value="1"/>
</dbReference>
<dbReference type="FunFam" id="3.40.1010.20:FF:000001">
    <property type="entry name" value="4-hydroxy-3-methylbut-2-enyl diphosphate reductase"/>
    <property type="match status" value="1"/>
</dbReference>
<dbReference type="FunFam" id="3.40.50.11270:FF:000001">
    <property type="entry name" value="4-hydroxy-3-methylbut-2-enyl diphosphate reductase"/>
    <property type="match status" value="1"/>
</dbReference>
<dbReference type="Gene3D" id="3.40.50.11270">
    <property type="match status" value="1"/>
</dbReference>
<dbReference type="Gene3D" id="3.40.1010.20">
    <property type="entry name" value="4-hydroxy-3-methylbut-2-enyl diphosphate reductase, catalytic domain"/>
    <property type="match status" value="2"/>
</dbReference>
<dbReference type="HAMAP" id="MF_00191">
    <property type="entry name" value="IspH"/>
    <property type="match status" value="1"/>
</dbReference>
<dbReference type="InterPro" id="IPR003451">
    <property type="entry name" value="LytB/IspH"/>
</dbReference>
<dbReference type="NCBIfam" id="TIGR00216">
    <property type="entry name" value="ispH_lytB"/>
    <property type="match status" value="1"/>
</dbReference>
<dbReference type="NCBIfam" id="NF002188">
    <property type="entry name" value="PRK01045.1-2"/>
    <property type="match status" value="1"/>
</dbReference>
<dbReference type="NCBIfam" id="NF002190">
    <property type="entry name" value="PRK01045.1-4"/>
    <property type="match status" value="1"/>
</dbReference>
<dbReference type="PANTHER" id="PTHR30426">
    <property type="entry name" value="4-HYDROXY-3-METHYLBUT-2-ENYL DIPHOSPHATE REDUCTASE"/>
    <property type="match status" value="1"/>
</dbReference>
<dbReference type="PANTHER" id="PTHR30426:SF0">
    <property type="entry name" value="4-HYDROXY-3-METHYLBUT-2-ENYL DIPHOSPHATE REDUCTASE"/>
    <property type="match status" value="1"/>
</dbReference>
<dbReference type="Pfam" id="PF02401">
    <property type="entry name" value="LYTB"/>
    <property type="match status" value="1"/>
</dbReference>
<proteinExistence type="inferred from homology"/>
<protein>
    <recommendedName>
        <fullName evidence="1">4-hydroxy-3-methylbut-2-enyl diphosphate reductase</fullName>
        <shortName evidence="1">HMBPP reductase</shortName>
        <ecNumber evidence="1">1.17.7.4</ecNumber>
    </recommendedName>
</protein>
<sequence length="316" mass="34775">MQILLANPRGFCAGVDRAISIVENALAIYGAPIYVRHEVVHNRYVVDSLRERGAIFIEQISEVPDGAILIFSAHGVSQAVRNEAKSRDLTVFDATCPLVTKVHMEVARASRRGEESILIGHAGHPEVEGTMGQYSNPEGGMYLVESPDDVWKLTVKNEEKLSFMTQTTLSVDDTSDVIDALRKRFPKIVGPRKDDICYATTNRQEAVRALAEQAEVVLVVGSKNSSNSNRLAELAQRMGKRAFLIDDAKDIQEEWVKEVKCVGVTAGASAPDILVQNVVARLQQLGGGEAIPLEGREENIVFEVPKELRVDIREVD</sequence>
<gene>
    <name evidence="1" type="primary">ispH</name>
    <name type="ordered locus">EcE24377A_0029</name>
</gene>
<organism>
    <name type="scientific">Escherichia coli O139:H28 (strain E24377A / ETEC)</name>
    <dbReference type="NCBI Taxonomy" id="331111"/>
    <lineage>
        <taxon>Bacteria</taxon>
        <taxon>Pseudomonadati</taxon>
        <taxon>Pseudomonadota</taxon>
        <taxon>Gammaproteobacteria</taxon>
        <taxon>Enterobacterales</taxon>
        <taxon>Enterobacteriaceae</taxon>
        <taxon>Escherichia</taxon>
    </lineage>
</organism>
<accession>A7ZHB8</accession>
<comment type="function">
    <text evidence="1">Catalyzes the conversion of 1-hydroxy-2-methyl-2-(E)-butenyl 4-diphosphate (HMBPP) into a mixture of isopentenyl diphosphate (IPP) and dimethylallyl diphosphate (DMAPP). Acts in the terminal step of the DOXP/MEP pathway for isoprenoid precursor biosynthesis.</text>
</comment>
<comment type="catalytic activity">
    <reaction evidence="1">
        <text>isopentenyl diphosphate + 2 oxidized [2Fe-2S]-[ferredoxin] + H2O = (2E)-4-hydroxy-3-methylbut-2-enyl diphosphate + 2 reduced [2Fe-2S]-[ferredoxin] + 2 H(+)</text>
        <dbReference type="Rhea" id="RHEA:24488"/>
        <dbReference type="Rhea" id="RHEA-COMP:10000"/>
        <dbReference type="Rhea" id="RHEA-COMP:10001"/>
        <dbReference type="ChEBI" id="CHEBI:15377"/>
        <dbReference type="ChEBI" id="CHEBI:15378"/>
        <dbReference type="ChEBI" id="CHEBI:33737"/>
        <dbReference type="ChEBI" id="CHEBI:33738"/>
        <dbReference type="ChEBI" id="CHEBI:128753"/>
        <dbReference type="ChEBI" id="CHEBI:128769"/>
        <dbReference type="EC" id="1.17.7.4"/>
    </reaction>
</comment>
<comment type="catalytic activity">
    <reaction evidence="1">
        <text>dimethylallyl diphosphate + 2 oxidized [2Fe-2S]-[ferredoxin] + H2O = (2E)-4-hydroxy-3-methylbut-2-enyl diphosphate + 2 reduced [2Fe-2S]-[ferredoxin] + 2 H(+)</text>
        <dbReference type="Rhea" id="RHEA:24825"/>
        <dbReference type="Rhea" id="RHEA-COMP:10000"/>
        <dbReference type="Rhea" id="RHEA-COMP:10001"/>
        <dbReference type="ChEBI" id="CHEBI:15377"/>
        <dbReference type="ChEBI" id="CHEBI:15378"/>
        <dbReference type="ChEBI" id="CHEBI:33737"/>
        <dbReference type="ChEBI" id="CHEBI:33738"/>
        <dbReference type="ChEBI" id="CHEBI:57623"/>
        <dbReference type="ChEBI" id="CHEBI:128753"/>
        <dbReference type="EC" id="1.17.7.4"/>
    </reaction>
</comment>
<comment type="cofactor">
    <cofactor evidence="1">
        <name>[4Fe-4S] cluster</name>
        <dbReference type="ChEBI" id="CHEBI:49883"/>
    </cofactor>
    <text evidence="1">Binds 1 [4Fe-4S] cluster per subunit.</text>
</comment>
<comment type="pathway">
    <text evidence="1">Isoprenoid biosynthesis; dimethylallyl diphosphate biosynthesis; dimethylallyl diphosphate from (2E)-4-hydroxy-3-methylbutenyl diphosphate: step 1/1.</text>
</comment>
<comment type="pathway">
    <text evidence="1">Isoprenoid biosynthesis; isopentenyl diphosphate biosynthesis via DXP pathway; isopentenyl diphosphate from 1-deoxy-D-xylulose 5-phosphate: step 6/6.</text>
</comment>
<comment type="subunit">
    <text evidence="1">Homodimer.</text>
</comment>
<comment type="similarity">
    <text evidence="1">Belongs to the IspH family.</text>
</comment>
<keyword id="KW-0004">4Fe-4S</keyword>
<keyword id="KW-0408">Iron</keyword>
<keyword id="KW-0411">Iron-sulfur</keyword>
<keyword id="KW-0414">Isoprene biosynthesis</keyword>
<keyword id="KW-0479">Metal-binding</keyword>
<keyword id="KW-0560">Oxidoreductase</keyword>
<keyword id="KW-1185">Reference proteome</keyword>
<reference key="1">
    <citation type="journal article" date="2008" name="J. Bacteriol.">
        <title>The pangenome structure of Escherichia coli: comparative genomic analysis of E. coli commensal and pathogenic isolates.</title>
        <authorList>
            <person name="Rasko D.A."/>
            <person name="Rosovitz M.J."/>
            <person name="Myers G.S.A."/>
            <person name="Mongodin E.F."/>
            <person name="Fricke W.F."/>
            <person name="Gajer P."/>
            <person name="Crabtree J."/>
            <person name="Sebaihia M."/>
            <person name="Thomson N.R."/>
            <person name="Chaudhuri R."/>
            <person name="Henderson I.R."/>
            <person name="Sperandio V."/>
            <person name="Ravel J."/>
        </authorList>
    </citation>
    <scope>NUCLEOTIDE SEQUENCE [LARGE SCALE GENOMIC DNA]</scope>
    <source>
        <strain>E24377A / ETEC</strain>
    </source>
</reference>
<feature type="chain" id="PRO_1000058504" description="4-hydroxy-3-methylbut-2-enyl diphosphate reductase">
    <location>
        <begin position="1"/>
        <end position="316"/>
    </location>
</feature>
<feature type="active site" description="Proton donor" evidence="1">
    <location>
        <position position="126"/>
    </location>
</feature>
<feature type="binding site" evidence="1">
    <location>
        <position position="12"/>
    </location>
    <ligand>
        <name>[4Fe-4S] cluster</name>
        <dbReference type="ChEBI" id="CHEBI:49883"/>
    </ligand>
</feature>
<feature type="binding site" evidence="1">
    <location>
        <position position="41"/>
    </location>
    <ligand>
        <name>(2E)-4-hydroxy-3-methylbut-2-enyl diphosphate</name>
        <dbReference type="ChEBI" id="CHEBI:128753"/>
    </ligand>
</feature>
<feature type="binding site" evidence="1">
    <location>
        <position position="41"/>
    </location>
    <ligand>
        <name>dimethylallyl diphosphate</name>
        <dbReference type="ChEBI" id="CHEBI:57623"/>
    </ligand>
</feature>
<feature type="binding site" evidence="1">
    <location>
        <position position="41"/>
    </location>
    <ligand>
        <name>isopentenyl diphosphate</name>
        <dbReference type="ChEBI" id="CHEBI:128769"/>
    </ligand>
</feature>
<feature type="binding site" evidence="1">
    <location>
        <position position="74"/>
    </location>
    <ligand>
        <name>(2E)-4-hydroxy-3-methylbut-2-enyl diphosphate</name>
        <dbReference type="ChEBI" id="CHEBI:128753"/>
    </ligand>
</feature>
<feature type="binding site" evidence="1">
    <location>
        <position position="74"/>
    </location>
    <ligand>
        <name>dimethylallyl diphosphate</name>
        <dbReference type="ChEBI" id="CHEBI:57623"/>
    </ligand>
</feature>
<feature type="binding site" evidence="1">
    <location>
        <position position="74"/>
    </location>
    <ligand>
        <name>isopentenyl diphosphate</name>
        <dbReference type="ChEBI" id="CHEBI:128769"/>
    </ligand>
</feature>
<feature type="binding site" evidence="1">
    <location>
        <position position="96"/>
    </location>
    <ligand>
        <name>[4Fe-4S] cluster</name>
        <dbReference type="ChEBI" id="CHEBI:49883"/>
    </ligand>
</feature>
<feature type="binding site" evidence="1">
    <location>
        <position position="124"/>
    </location>
    <ligand>
        <name>(2E)-4-hydroxy-3-methylbut-2-enyl diphosphate</name>
        <dbReference type="ChEBI" id="CHEBI:128753"/>
    </ligand>
</feature>
<feature type="binding site" evidence="1">
    <location>
        <position position="124"/>
    </location>
    <ligand>
        <name>dimethylallyl diphosphate</name>
        <dbReference type="ChEBI" id="CHEBI:57623"/>
    </ligand>
</feature>
<feature type="binding site" evidence="1">
    <location>
        <position position="124"/>
    </location>
    <ligand>
        <name>isopentenyl diphosphate</name>
        <dbReference type="ChEBI" id="CHEBI:128769"/>
    </ligand>
</feature>
<feature type="binding site" evidence="1">
    <location>
        <position position="167"/>
    </location>
    <ligand>
        <name>(2E)-4-hydroxy-3-methylbut-2-enyl diphosphate</name>
        <dbReference type="ChEBI" id="CHEBI:128753"/>
    </ligand>
</feature>
<feature type="binding site" evidence="1">
    <location>
        <position position="197"/>
    </location>
    <ligand>
        <name>[4Fe-4S] cluster</name>
        <dbReference type="ChEBI" id="CHEBI:49883"/>
    </ligand>
</feature>
<feature type="binding site" evidence="1">
    <location>
        <position position="225"/>
    </location>
    <ligand>
        <name>(2E)-4-hydroxy-3-methylbut-2-enyl diphosphate</name>
        <dbReference type="ChEBI" id="CHEBI:128753"/>
    </ligand>
</feature>
<feature type="binding site" evidence="1">
    <location>
        <position position="225"/>
    </location>
    <ligand>
        <name>dimethylallyl diphosphate</name>
        <dbReference type="ChEBI" id="CHEBI:57623"/>
    </ligand>
</feature>
<feature type="binding site" evidence="1">
    <location>
        <position position="225"/>
    </location>
    <ligand>
        <name>isopentenyl diphosphate</name>
        <dbReference type="ChEBI" id="CHEBI:128769"/>
    </ligand>
</feature>
<feature type="binding site" evidence="1">
    <location>
        <position position="226"/>
    </location>
    <ligand>
        <name>(2E)-4-hydroxy-3-methylbut-2-enyl diphosphate</name>
        <dbReference type="ChEBI" id="CHEBI:128753"/>
    </ligand>
</feature>
<feature type="binding site" evidence="1">
    <location>
        <position position="226"/>
    </location>
    <ligand>
        <name>dimethylallyl diphosphate</name>
        <dbReference type="ChEBI" id="CHEBI:57623"/>
    </ligand>
</feature>
<feature type="binding site" evidence="1">
    <location>
        <position position="226"/>
    </location>
    <ligand>
        <name>isopentenyl diphosphate</name>
        <dbReference type="ChEBI" id="CHEBI:128769"/>
    </ligand>
</feature>
<feature type="binding site" evidence="1">
    <location>
        <position position="227"/>
    </location>
    <ligand>
        <name>(2E)-4-hydroxy-3-methylbut-2-enyl diphosphate</name>
        <dbReference type="ChEBI" id="CHEBI:128753"/>
    </ligand>
</feature>
<feature type="binding site" evidence="1">
    <location>
        <position position="227"/>
    </location>
    <ligand>
        <name>dimethylallyl diphosphate</name>
        <dbReference type="ChEBI" id="CHEBI:57623"/>
    </ligand>
</feature>
<feature type="binding site" evidence="1">
    <location>
        <position position="227"/>
    </location>
    <ligand>
        <name>isopentenyl diphosphate</name>
        <dbReference type="ChEBI" id="CHEBI:128769"/>
    </ligand>
</feature>
<feature type="binding site" evidence="1">
    <location>
        <position position="269"/>
    </location>
    <ligand>
        <name>(2E)-4-hydroxy-3-methylbut-2-enyl diphosphate</name>
        <dbReference type="ChEBI" id="CHEBI:128753"/>
    </ligand>
</feature>
<feature type="binding site" evidence="1">
    <location>
        <position position="269"/>
    </location>
    <ligand>
        <name>dimethylallyl diphosphate</name>
        <dbReference type="ChEBI" id="CHEBI:57623"/>
    </ligand>
</feature>
<feature type="binding site" evidence="1">
    <location>
        <position position="269"/>
    </location>
    <ligand>
        <name>isopentenyl diphosphate</name>
        <dbReference type="ChEBI" id="CHEBI:128769"/>
    </ligand>
</feature>
<name>ISPH_ECO24</name>
<evidence type="ECO:0000255" key="1">
    <source>
        <dbReference type="HAMAP-Rule" id="MF_00191"/>
    </source>
</evidence>